<sequence length="136" mass="15302">MRDHLPPGLPPDPFADDPCDPSAALEAVEPGQPLDQQERMAVEADLADLAVYEALLAHKGIRGLVVCCDECQQDHYHDWDMLRSNLLQLLIDGTVRPHEPAYDPEPDSYVTWDYCRGYADASLNEAAPDADRFRRR</sequence>
<evidence type="ECO:0000256" key="1">
    <source>
        <dbReference type="SAM" id="MobiDB-lite"/>
    </source>
</evidence>
<evidence type="ECO:0000305" key="2"/>
<dbReference type="EMBL" id="LT708304">
    <property type="protein sequence ID" value="SIU02074.1"/>
    <property type="molecule type" value="Genomic_DNA"/>
</dbReference>
<dbReference type="RefSeq" id="NP_857086.1">
    <property type="nucleotide sequence ID" value="NC_002945.3"/>
</dbReference>
<dbReference type="RefSeq" id="WP_003418008.1">
    <property type="nucleotide sequence ID" value="NC_002945.4"/>
</dbReference>
<dbReference type="SMR" id="P65080"/>
<dbReference type="KEGG" id="mbo:BQ2027_MB3446"/>
<dbReference type="PATRIC" id="fig|233413.5.peg.3781"/>
<dbReference type="Proteomes" id="UP000001419">
    <property type="component" value="Chromosome"/>
</dbReference>
<dbReference type="InterPro" id="IPR035165">
    <property type="entry name" value="DUF5319"/>
</dbReference>
<dbReference type="Pfam" id="PF17252">
    <property type="entry name" value="DUF5319"/>
    <property type="match status" value="1"/>
</dbReference>
<feature type="chain" id="PRO_0000104131" description="Uncharacterized protein Mb3446">
    <location>
        <begin position="1"/>
        <end position="136"/>
    </location>
</feature>
<feature type="region of interest" description="Disordered" evidence="1">
    <location>
        <begin position="1"/>
        <end position="33"/>
    </location>
</feature>
<name>Y3446_MYCBO</name>
<accession>P65080</accession>
<accession>A0A1R3Y458</accession>
<accession>Q50714</accession>
<accession>X2BN69</accession>
<keyword id="KW-1185">Reference proteome</keyword>
<gene>
    <name type="ordered locus">BQ2027_MB3446</name>
</gene>
<comment type="similarity">
    <text evidence="2">To M.leprae ML0386.</text>
</comment>
<organism>
    <name type="scientific">Mycobacterium bovis (strain ATCC BAA-935 / AF2122/97)</name>
    <dbReference type="NCBI Taxonomy" id="233413"/>
    <lineage>
        <taxon>Bacteria</taxon>
        <taxon>Bacillati</taxon>
        <taxon>Actinomycetota</taxon>
        <taxon>Actinomycetes</taxon>
        <taxon>Mycobacteriales</taxon>
        <taxon>Mycobacteriaceae</taxon>
        <taxon>Mycobacterium</taxon>
        <taxon>Mycobacterium tuberculosis complex</taxon>
    </lineage>
</organism>
<protein>
    <recommendedName>
        <fullName>Uncharacterized protein Mb3446</fullName>
    </recommendedName>
</protein>
<reference key="1">
    <citation type="journal article" date="2003" name="Proc. Natl. Acad. Sci. U.S.A.">
        <title>The complete genome sequence of Mycobacterium bovis.</title>
        <authorList>
            <person name="Garnier T."/>
            <person name="Eiglmeier K."/>
            <person name="Camus J.-C."/>
            <person name="Medina N."/>
            <person name="Mansoor H."/>
            <person name="Pryor M."/>
            <person name="Duthoy S."/>
            <person name="Grondin S."/>
            <person name="Lacroix C."/>
            <person name="Monsempe C."/>
            <person name="Simon S."/>
            <person name="Harris B."/>
            <person name="Atkin R."/>
            <person name="Doggett J."/>
            <person name="Mayes R."/>
            <person name="Keating L."/>
            <person name="Wheeler P.R."/>
            <person name="Parkhill J."/>
            <person name="Barrell B.G."/>
            <person name="Cole S.T."/>
            <person name="Gordon S.V."/>
            <person name="Hewinson R.G."/>
        </authorList>
    </citation>
    <scope>NUCLEOTIDE SEQUENCE [LARGE SCALE GENOMIC DNA]</scope>
    <source>
        <strain>ATCC BAA-935 / AF2122/97</strain>
    </source>
</reference>
<reference key="2">
    <citation type="journal article" date="2017" name="Genome Announc.">
        <title>Updated reference genome sequence and annotation of Mycobacterium bovis AF2122/97.</title>
        <authorList>
            <person name="Malone K.M."/>
            <person name="Farrell D."/>
            <person name="Stuber T.P."/>
            <person name="Schubert O.T."/>
            <person name="Aebersold R."/>
            <person name="Robbe-Austerman S."/>
            <person name="Gordon S.V."/>
        </authorList>
    </citation>
    <scope>NUCLEOTIDE SEQUENCE [LARGE SCALE GENOMIC DNA]</scope>
    <scope>GENOME REANNOTATION</scope>
    <source>
        <strain>ATCC BAA-935 / AF2122/97</strain>
    </source>
</reference>
<proteinExistence type="predicted"/>